<name>LEXA_STAEQ</name>
<evidence type="ECO:0000255" key="1">
    <source>
        <dbReference type="HAMAP-Rule" id="MF_00015"/>
    </source>
</evidence>
<accession>Q5HPK2</accession>
<sequence>MRELTKRQSEIYDYIKKIVQTKGYPPSVREIGEAVGLASSSTVHGHLSRLEEKGYIRRDPTKPRAIEIVSEQLDEVNVEETIHVPVIGKVTAGVPITAVENIEEYFPLPEHLTSTHNSDIFILNVVGESMIEAGILDGDKVIVRSQTIAENGDIIVAMTEDEEATVKRFYKEKNRYRLQPENSTMEPIYLDNVIVVGKVIGLYREM</sequence>
<gene>
    <name evidence="1" type="primary">lexA</name>
    <name type="ordered locus">SERP0909</name>
</gene>
<reference key="1">
    <citation type="journal article" date="2005" name="J. Bacteriol.">
        <title>Insights on evolution of virulence and resistance from the complete genome analysis of an early methicillin-resistant Staphylococcus aureus strain and a biofilm-producing methicillin-resistant Staphylococcus epidermidis strain.</title>
        <authorList>
            <person name="Gill S.R."/>
            <person name="Fouts D.E."/>
            <person name="Archer G.L."/>
            <person name="Mongodin E.F."/>
            <person name="DeBoy R.T."/>
            <person name="Ravel J."/>
            <person name="Paulsen I.T."/>
            <person name="Kolonay J.F."/>
            <person name="Brinkac L.M."/>
            <person name="Beanan M.J."/>
            <person name="Dodson R.J."/>
            <person name="Daugherty S.C."/>
            <person name="Madupu R."/>
            <person name="Angiuoli S.V."/>
            <person name="Durkin A.S."/>
            <person name="Haft D.H."/>
            <person name="Vamathevan J.J."/>
            <person name="Khouri H."/>
            <person name="Utterback T.R."/>
            <person name="Lee C."/>
            <person name="Dimitrov G."/>
            <person name="Jiang L."/>
            <person name="Qin H."/>
            <person name="Weidman J."/>
            <person name="Tran K."/>
            <person name="Kang K.H."/>
            <person name="Hance I.R."/>
            <person name="Nelson K.E."/>
            <person name="Fraser C.M."/>
        </authorList>
    </citation>
    <scope>NUCLEOTIDE SEQUENCE [LARGE SCALE GENOMIC DNA]</scope>
    <source>
        <strain>ATCC 35984 / DSM 28319 / BCRC 17069 / CCUG 31568 / BM 3577 / RP62A</strain>
    </source>
</reference>
<dbReference type="EC" id="3.4.21.88" evidence="1"/>
<dbReference type="EMBL" id="CP000029">
    <property type="protein sequence ID" value="AAW54276.1"/>
    <property type="molecule type" value="Genomic_DNA"/>
</dbReference>
<dbReference type="RefSeq" id="WP_001831182.1">
    <property type="nucleotide sequence ID" value="NC_002976.3"/>
</dbReference>
<dbReference type="SMR" id="Q5HPK2"/>
<dbReference type="STRING" id="176279.SERP0909"/>
<dbReference type="MEROPS" id="S24.001"/>
<dbReference type="GeneID" id="50018851"/>
<dbReference type="KEGG" id="ser:SERP0909"/>
<dbReference type="eggNOG" id="COG1974">
    <property type="taxonomic scope" value="Bacteria"/>
</dbReference>
<dbReference type="HOGENOM" id="CLU_066192_45_1_9"/>
<dbReference type="Proteomes" id="UP000000531">
    <property type="component" value="Chromosome"/>
</dbReference>
<dbReference type="GO" id="GO:0003677">
    <property type="term" value="F:DNA binding"/>
    <property type="evidence" value="ECO:0007669"/>
    <property type="project" value="UniProtKB-UniRule"/>
</dbReference>
<dbReference type="GO" id="GO:0004252">
    <property type="term" value="F:serine-type endopeptidase activity"/>
    <property type="evidence" value="ECO:0007669"/>
    <property type="project" value="UniProtKB-UniRule"/>
</dbReference>
<dbReference type="GO" id="GO:0006281">
    <property type="term" value="P:DNA repair"/>
    <property type="evidence" value="ECO:0007669"/>
    <property type="project" value="UniProtKB-UniRule"/>
</dbReference>
<dbReference type="GO" id="GO:0006260">
    <property type="term" value="P:DNA replication"/>
    <property type="evidence" value="ECO:0007669"/>
    <property type="project" value="UniProtKB-UniRule"/>
</dbReference>
<dbReference type="GO" id="GO:0045892">
    <property type="term" value="P:negative regulation of DNA-templated transcription"/>
    <property type="evidence" value="ECO:0007669"/>
    <property type="project" value="UniProtKB-UniRule"/>
</dbReference>
<dbReference type="GO" id="GO:0006508">
    <property type="term" value="P:proteolysis"/>
    <property type="evidence" value="ECO:0007669"/>
    <property type="project" value="InterPro"/>
</dbReference>
<dbReference type="GO" id="GO:0009432">
    <property type="term" value="P:SOS response"/>
    <property type="evidence" value="ECO:0007669"/>
    <property type="project" value="UniProtKB-UniRule"/>
</dbReference>
<dbReference type="CDD" id="cd00090">
    <property type="entry name" value="HTH_ARSR"/>
    <property type="match status" value="1"/>
</dbReference>
<dbReference type="CDD" id="cd06529">
    <property type="entry name" value="S24_LexA-like"/>
    <property type="match status" value="1"/>
</dbReference>
<dbReference type="FunFam" id="1.10.10.10:FF:000009">
    <property type="entry name" value="LexA repressor"/>
    <property type="match status" value="1"/>
</dbReference>
<dbReference type="FunFam" id="2.10.109.10:FF:000001">
    <property type="entry name" value="LexA repressor"/>
    <property type="match status" value="1"/>
</dbReference>
<dbReference type="Gene3D" id="2.10.109.10">
    <property type="entry name" value="Umud Fragment, subunit A"/>
    <property type="match status" value="1"/>
</dbReference>
<dbReference type="Gene3D" id="1.10.10.10">
    <property type="entry name" value="Winged helix-like DNA-binding domain superfamily/Winged helix DNA-binding domain"/>
    <property type="match status" value="1"/>
</dbReference>
<dbReference type="HAMAP" id="MF_00015">
    <property type="entry name" value="LexA"/>
    <property type="match status" value="1"/>
</dbReference>
<dbReference type="InterPro" id="IPR011991">
    <property type="entry name" value="ArsR-like_HTH"/>
</dbReference>
<dbReference type="InterPro" id="IPR006200">
    <property type="entry name" value="LexA"/>
</dbReference>
<dbReference type="InterPro" id="IPR039418">
    <property type="entry name" value="LexA-like"/>
</dbReference>
<dbReference type="InterPro" id="IPR036286">
    <property type="entry name" value="LexA/Signal_pep-like_sf"/>
</dbReference>
<dbReference type="InterPro" id="IPR006199">
    <property type="entry name" value="LexA_DNA-bd_dom"/>
</dbReference>
<dbReference type="InterPro" id="IPR050077">
    <property type="entry name" value="LexA_repressor"/>
</dbReference>
<dbReference type="InterPro" id="IPR006197">
    <property type="entry name" value="Peptidase_S24_LexA"/>
</dbReference>
<dbReference type="InterPro" id="IPR015927">
    <property type="entry name" value="Peptidase_S24_S26A/B/C"/>
</dbReference>
<dbReference type="InterPro" id="IPR036388">
    <property type="entry name" value="WH-like_DNA-bd_sf"/>
</dbReference>
<dbReference type="InterPro" id="IPR036390">
    <property type="entry name" value="WH_DNA-bd_sf"/>
</dbReference>
<dbReference type="NCBIfam" id="TIGR00498">
    <property type="entry name" value="lexA"/>
    <property type="match status" value="1"/>
</dbReference>
<dbReference type="PANTHER" id="PTHR33516">
    <property type="entry name" value="LEXA REPRESSOR"/>
    <property type="match status" value="1"/>
</dbReference>
<dbReference type="PANTHER" id="PTHR33516:SF2">
    <property type="entry name" value="LEXA REPRESSOR-RELATED"/>
    <property type="match status" value="1"/>
</dbReference>
<dbReference type="Pfam" id="PF01726">
    <property type="entry name" value="LexA_DNA_bind"/>
    <property type="match status" value="1"/>
</dbReference>
<dbReference type="Pfam" id="PF00717">
    <property type="entry name" value="Peptidase_S24"/>
    <property type="match status" value="1"/>
</dbReference>
<dbReference type="PRINTS" id="PR00726">
    <property type="entry name" value="LEXASERPTASE"/>
</dbReference>
<dbReference type="SUPFAM" id="SSF51306">
    <property type="entry name" value="LexA/Signal peptidase"/>
    <property type="match status" value="1"/>
</dbReference>
<dbReference type="SUPFAM" id="SSF46785">
    <property type="entry name" value="Winged helix' DNA-binding domain"/>
    <property type="match status" value="1"/>
</dbReference>
<organism>
    <name type="scientific">Staphylococcus epidermidis (strain ATCC 35984 / DSM 28319 / BCRC 17069 / CCUG 31568 / BM 3577 / RP62A)</name>
    <dbReference type="NCBI Taxonomy" id="176279"/>
    <lineage>
        <taxon>Bacteria</taxon>
        <taxon>Bacillati</taxon>
        <taxon>Bacillota</taxon>
        <taxon>Bacilli</taxon>
        <taxon>Bacillales</taxon>
        <taxon>Staphylococcaceae</taxon>
        <taxon>Staphylococcus</taxon>
    </lineage>
</organism>
<comment type="function">
    <text evidence="1">Represses a number of genes involved in the response to DNA damage (SOS response), including recA and lexA. In the presence of single-stranded DNA, RecA interacts with LexA causing an autocatalytic cleavage which disrupts the DNA-binding part of LexA, leading to derepression of the SOS regulon and eventually DNA repair.</text>
</comment>
<comment type="catalytic activity">
    <reaction evidence="1">
        <text>Hydrolysis of Ala-|-Gly bond in repressor LexA.</text>
        <dbReference type="EC" id="3.4.21.88"/>
    </reaction>
</comment>
<comment type="subunit">
    <text evidence="1">Homodimer.</text>
</comment>
<comment type="similarity">
    <text evidence="1">Belongs to the peptidase S24 family.</text>
</comment>
<proteinExistence type="inferred from homology"/>
<feature type="chain" id="PRO_0000170093" description="LexA repressor">
    <location>
        <begin position="1"/>
        <end position="206"/>
    </location>
</feature>
<feature type="DNA-binding region" description="H-T-H motif" evidence="1">
    <location>
        <begin position="28"/>
        <end position="48"/>
    </location>
</feature>
<feature type="active site" description="For autocatalytic cleavage activity" evidence="1">
    <location>
        <position position="129"/>
    </location>
</feature>
<feature type="active site" description="For autocatalytic cleavage activity" evidence="1">
    <location>
        <position position="167"/>
    </location>
</feature>
<feature type="site" description="Cleavage; by autolysis" evidence="1">
    <location>
        <begin position="92"/>
        <end position="93"/>
    </location>
</feature>
<keyword id="KW-0068">Autocatalytic cleavage</keyword>
<keyword id="KW-0227">DNA damage</keyword>
<keyword id="KW-0234">DNA repair</keyword>
<keyword id="KW-0235">DNA replication</keyword>
<keyword id="KW-0238">DNA-binding</keyword>
<keyword id="KW-0378">Hydrolase</keyword>
<keyword id="KW-1185">Reference proteome</keyword>
<keyword id="KW-0678">Repressor</keyword>
<keyword id="KW-0742">SOS response</keyword>
<keyword id="KW-0804">Transcription</keyword>
<keyword id="KW-0805">Transcription regulation</keyword>
<protein>
    <recommendedName>
        <fullName evidence="1">LexA repressor</fullName>
        <ecNumber evidence="1">3.4.21.88</ecNumber>
    </recommendedName>
</protein>